<organism>
    <name type="scientific">Margaritifera margaritifera</name>
    <name type="common">Freshwater pearl mussel</name>
    <dbReference type="NCBI Taxonomy" id="102329"/>
    <lineage>
        <taxon>Eukaryota</taxon>
        <taxon>Metazoa</taxon>
        <taxon>Spiralia</taxon>
        <taxon>Lophotrochozoa</taxon>
        <taxon>Mollusca</taxon>
        <taxon>Bivalvia</taxon>
        <taxon>Autobranchia</taxon>
        <taxon>Pteriomorphia</taxon>
        <taxon>Pterioida</taxon>
        <taxon>Pterioidea</taxon>
        <taxon>Pteriidae</taxon>
        <taxon>Pinctada</taxon>
    </lineage>
</organism>
<feature type="signal peptide" evidence="1">
    <location>
        <begin position="1"/>
        <end position="26"/>
    </location>
</feature>
<feature type="chain" id="PRO_0000417978" description="NTR domain-containing protein" evidence="1">
    <location>
        <begin position="27"/>
        <end position="148"/>
    </location>
</feature>
<feature type="domain" description="NTR" evidence="2">
    <location>
        <begin position="27"/>
        <end position="146"/>
    </location>
</feature>
<feature type="disulfide bond" evidence="2">
    <location>
        <begin position="27"/>
        <end position="96"/>
    </location>
</feature>
<feature type="disulfide bond" evidence="2">
    <location>
        <begin position="29"/>
        <end position="122"/>
    </location>
</feature>
<feature type="disulfide bond" evidence="2">
    <location>
        <begin position="40"/>
        <end position="146"/>
    </location>
</feature>
<dbReference type="EMBL" id="HE610399">
    <property type="protein sequence ID" value="CCE46173.1"/>
    <property type="molecule type" value="mRNA"/>
</dbReference>
<dbReference type="SMR" id="H2A0N2"/>
<dbReference type="GO" id="GO:0031012">
    <property type="term" value="C:extracellular matrix"/>
    <property type="evidence" value="ECO:0007669"/>
    <property type="project" value="TreeGrafter"/>
</dbReference>
<dbReference type="GO" id="GO:0005615">
    <property type="term" value="C:extracellular space"/>
    <property type="evidence" value="ECO:0007669"/>
    <property type="project" value="TreeGrafter"/>
</dbReference>
<dbReference type="GO" id="GO:0008191">
    <property type="term" value="F:metalloendopeptidase inhibitor activity"/>
    <property type="evidence" value="ECO:0007669"/>
    <property type="project" value="InterPro"/>
</dbReference>
<dbReference type="GO" id="GO:0002020">
    <property type="term" value="F:protease binding"/>
    <property type="evidence" value="ECO:0007669"/>
    <property type="project" value="TreeGrafter"/>
</dbReference>
<dbReference type="GO" id="GO:0051045">
    <property type="term" value="P:negative regulation of membrane protein ectodomain proteolysis"/>
    <property type="evidence" value="ECO:0007669"/>
    <property type="project" value="TreeGrafter"/>
</dbReference>
<dbReference type="Gene3D" id="2.40.50.120">
    <property type="match status" value="1"/>
</dbReference>
<dbReference type="InterPro" id="IPR001134">
    <property type="entry name" value="Netrin_domain"/>
</dbReference>
<dbReference type="InterPro" id="IPR001820">
    <property type="entry name" value="TIMP"/>
</dbReference>
<dbReference type="InterPro" id="IPR008993">
    <property type="entry name" value="TIMP-like_OB-fold"/>
</dbReference>
<dbReference type="PANTHER" id="PTHR11844">
    <property type="entry name" value="METALLOPROTEASE INHIBITOR"/>
    <property type="match status" value="1"/>
</dbReference>
<dbReference type="PANTHER" id="PTHR11844:SF33">
    <property type="entry name" value="TISSUE INHIBITOR OF METALLOPROTEINASE"/>
    <property type="match status" value="1"/>
</dbReference>
<dbReference type="Pfam" id="PF00965">
    <property type="entry name" value="TIMP"/>
    <property type="match status" value="1"/>
</dbReference>
<dbReference type="SUPFAM" id="SSF50242">
    <property type="entry name" value="TIMP-like"/>
    <property type="match status" value="1"/>
</dbReference>
<dbReference type="PROSITE" id="PS50189">
    <property type="entry name" value="NTR"/>
    <property type="match status" value="1"/>
</dbReference>
<protein>
    <recommendedName>
        <fullName>NTR domain-containing protein</fullName>
    </recommendedName>
    <alternativeName>
        <fullName>Prism tissue inhibitor metalloproteinase protein 2</fullName>
    </alternativeName>
</protein>
<sequence>MVCRFSYVQVVLILVVLSVIISWANACSCFPPDETRQQKCRRADFVFLGRGYVTGIQQIGSFFYLRYCFLIDRVFKDRASSLNIPCALTNVESSYCGVRFERGRRYIVSGYLTRSGNQIGACEWNERWSNVPFLTRLQLFNDPQWCLP</sequence>
<comment type="subcellular location">
    <subcellularLocation>
        <location evidence="3">Secreted</location>
    </subcellularLocation>
</comment>
<comment type="tissue specificity">
    <text evidence="3">Prismatic layer of shell (at protein level). Expressed primarily in the mantle with highest level in the mantle edge and lower level in the mantle pallium.</text>
</comment>
<keyword id="KW-0903">Direct protein sequencing</keyword>
<keyword id="KW-1015">Disulfide bond</keyword>
<keyword id="KW-0964">Secreted</keyword>
<keyword id="KW-0732">Signal</keyword>
<accession>H2A0N2</accession>
<proteinExistence type="evidence at protein level"/>
<evidence type="ECO:0000255" key="1"/>
<evidence type="ECO:0000255" key="2">
    <source>
        <dbReference type="PROSITE-ProRule" id="PRU00295"/>
    </source>
</evidence>
<evidence type="ECO:0000269" key="3">
    <source>
    </source>
</evidence>
<evidence type="ECO:0000305" key="4"/>
<name>NCP_PINMG</name>
<reference evidence="4" key="1">
    <citation type="journal article" date="2010" name="BMC Genomics">
        <title>Transcriptome and proteome analysis of Pinctada margaritifera calcifying mantle and shell: focus on biomineralization.</title>
        <authorList>
            <person name="Joubert C."/>
            <person name="Piquemal D."/>
            <person name="Marie B."/>
            <person name="Manchon L."/>
            <person name="Pierrat F."/>
            <person name="Zanella-Cleon I."/>
            <person name="Cochennec-Laureau N."/>
            <person name="Gueguen Y."/>
            <person name="Montagnani C."/>
        </authorList>
    </citation>
    <scope>NUCLEOTIDE SEQUENCE [MRNA]</scope>
    <scope>IDENTIFICATION</scope>
    <source>
        <tissue>Mantle</tissue>
    </source>
</reference>
<reference key="2">
    <citation type="journal article" date="2012" name="Proc. Natl. Acad. Sci. U.S.A.">
        <title>Different secretory repertoires control the biomineralization processes of prism and nacre deposition of the pearl oyster shell.</title>
        <authorList>
            <person name="Marie B."/>
            <person name="Joubert C."/>
            <person name="Tayale A."/>
            <person name="Zanella-Cleon I."/>
            <person name="Belliard C."/>
            <person name="Piquemal D."/>
            <person name="Cochennec-Laureau N."/>
            <person name="Marin F."/>
            <person name="Gueguen Y."/>
            <person name="Montagnani C."/>
        </authorList>
    </citation>
    <scope>PROTEIN SEQUENCE OF 106-114</scope>
    <scope>SUBCELLULAR LOCATION</scope>
    <scope>TISSUE SPECIFICITY</scope>
    <source>
        <tissue>Shell</tissue>
    </source>
</reference>